<reference key="1">
    <citation type="submission" date="2008-04" db="EMBL/GenBank/DDBJ databases">
        <title>Complete sequence of Clostridium botulinum strain Eklund.</title>
        <authorList>
            <person name="Brinkac L.M."/>
            <person name="Brown J.L."/>
            <person name="Bruce D."/>
            <person name="Detter C."/>
            <person name="Munk C."/>
            <person name="Smith L.A."/>
            <person name="Smith T.J."/>
            <person name="Sutton G."/>
            <person name="Brettin T.S."/>
        </authorList>
    </citation>
    <scope>NUCLEOTIDE SEQUENCE [LARGE SCALE GENOMIC DNA]</scope>
    <source>
        <strain>Eklund 17B / Type B</strain>
    </source>
</reference>
<feature type="chain" id="PRO_1000199740" description="UPF0371 protein CLL_A2797">
    <location>
        <begin position="1"/>
        <end position="502"/>
    </location>
</feature>
<gene>
    <name type="ordered locus">CLL_A2797</name>
</gene>
<accession>B2TP27</accession>
<dbReference type="EMBL" id="CP001056">
    <property type="protein sequence ID" value="ACD24060.1"/>
    <property type="molecule type" value="Genomic_DNA"/>
</dbReference>
<dbReference type="SMR" id="B2TP27"/>
<dbReference type="KEGG" id="cbk:CLL_A2797"/>
<dbReference type="PATRIC" id="fig|935198.13.peg.2758"/>
<dbReference type="HOGENOM" id="CLU_046981_0_0_9"/>
<dbReference type="Proteomes" id="UP000001195">
    <property type="component" value="Chromosome"/>
</dbReference>
<dbReference type="Gene3D" id="1.20.1570.10">
    <property type="entry name" value="dip2346 domain like"/>
    <property type="match status" value="1"/>
</dbReference>
<dbReference type="Gene3D" id="3.10.630.10">
    <property type="entry name" value="dip2346 domain like"/>
    <property type="match status" value="1"/>
</dbReference>
<dbReference type="Gene3D" id="3.40.140.40">
    <property type="entry name" value="Domain of unknown function (DUF1846), C-terminal subdomain"/>
    <property type="match status" value="1"/>
</dbReference>
<dbReference type="HAMAP" id="MF_01567">
    <property type="entry name" value="UPF0371"/>
    <property type="match status" value="1"/>
</dbReference>
<dbReference type="InterPro" id="IPR014999">
    <property type="entry name" value="DUF1846"/>
</dbReference>
<dbReference type="InterPro" id="IPR048441">
    <property type="entry name" value="DUF1846_C"/>
</dbReference>
<dbReference type="InterPro" id="IPR048496">
    <property type="entry name" value="DUF1846_N"/>
</dbReference>
<dbReference type="NCBIfam" id="NF010184">
    <property type="entry name" value="PRK13663.1"/>
    <property type="match status" value="1"/>
</dbReference>
<dbReference type="Pfam" id="PF08903">
    <property type="entry name" value="DUF1846"/>
    <property type="match status" value="1"/>
</dbReference>
<dbReference type="Pfam" id="PF20921">
    <property type="entry name" value="DUF1846_C"/>
    <property type="match status" value="1"/>
</dbReference>
<dbReference type="PIRSF" id="PIRSF033132">
    <property type="entry name" value="DUF1846"/>
    <property type="match status" value="1"/>
</dbReference>
<comment type="similarity">
    <text evidence="1">Belongs to the UPF0371 family.</text>
</comment>
<name>Y2797_CLOBB</name>
<sequence length="502" mass="56509">MKIGFDHEKYLEEQSKYILERVDSYDKLYLEFGGKLFNDRHAMRVLPGFDENAKIKLLHKLKEKVEVVICVYAGDIERNKIRGDFGITYDMDVLRLIDDLRTYELEVNSVVITRYNGQPATTVFINKLERRGIKVYKHKSTKGYPTDVDTIVSEEGYGQNPYIETTKPIVVVTAPGPGSGKLATCLSQLYHESKRGNAAGYSKFETFPVWNVPLKHPLNIAYEAATVDLKDVNMLDSFHMDAYNKVTVNYNRDIESFPVLKRIIEKITCKESIYKSPTDMGVNRVGFGIVDDDAVKEASKQEIIRRYFKTGCDYKKGYADKETFDRSKLIMEEVDLKETDRKVVLPAREKSAKLKMATDENEICPVVALELSDGKILTGKSSDLMDGAAAVIINAIKYLANISDDIYLISPVILEPIMNLKSKTFNEKNISLNCEEVLTALSISAATNPTAQVAMEKLPLLRGCQAHATTILSRADDTTLGKLGIDVTCDPNYPSESLYYNN</sequence>
<evidence type="ECO:0000255" key="1">
    <source>
        <dbReference type="HAMAP-Rule" id="MF_01567"/>
    </source>
</evidence>
<proteinExistence type="inferred from homology"/>
<protein>
    <recommendedName>
        <fullName evidence="1">UPF0371 protein CLL_A2797</fullName>
    </recommendedName>
</protein>
<organism>
    <name type="scientific">Clostridium botulinum (strain Eklund 17B / Type B)</name>
    <dbReference type="NCBI Taxonomy" id="935198"/>
    <lineage>
        <taxon>Bacteria</taxon>
        <taxon>Bacillati</taxon>
        <taxon>Bacillota</taxon>
        <taxon>Clostridia</taxon>
        <taxon>Eubacteriales</taxon>
        <taxon>Clostridiaceae</taxon>
        <taxon>Clostridium</taxon>
    </lineage>
</organism>